<reference key="1">
    <citation type="journal article" date="1995" name="Science">
        <title>Whole-genome random sequencing and assembly of Haemophilus influenzae Rd.</title>
        <authorList>
            <person name="Fleischmann R.D."/>
            <person name="Adams M.D."/>
            <person name="White O."/>
            <person name="Clayton R.A."/>
            <person name="Kirkness E.F."/>
            <person name="Kerlavage A.R."/>
            <person name="Bult C.J."/>
            <person name="Tomb J.-F."/>
            <person name="Dougherty B.A."/>
            <person name="Merrick J.M."/>
            <person name="McKenney K."/>
            <person name="Sutton G.G."/>
            <person name="FitzHugh W."/>
            <person name="Fields C.A."/>
            <person name="Gocayne J.D."/>
            <person name="Scott J.D."/>
            <person name="Shirley R."/>
            <person name="Liu L.-I."/>
            <person name="Glodek A."/>
            <person name="Kelley J.M."/>
            <person name="Weidman J.F."/>
            <person name="Phillips C.A."/>
            <person name="Spriggs T."/>
            <person name="Hedblom E."/>
            <person name="Cotton M.D."/>
            <person name="Utterback T.R."/>
            <person name="Hanna M.C."/>
            <person name="Nguyen D.T."/>
            <person name="Saudek D.M."/>
            <person name="Brandon R.C."/>
            <person name="Fine L.D."/>
            <person name="Fritchman J.L."/>
            <person name="Fuhrmann J.L."/>
            <person name="Geoghagen N.S.M."/>
            <person name="Gnehm C.L."/>
            <person name="McDonald L.A."/>
            <person name="Small K.V."/>
            <person name="Fraser C.M."/>
            <person name="Smith H.O."/>
            <person name="Venter J.C."/>
        </authorList>
    </citation>
    <scope>NUCLEOTIDE SEQUENCE [LARGE SCALE GENOMIC DNA]</scope>
    <source>
        <strain>ATCC 51907 / DSM 11121 / KW20 / Rd</strain>
    </source>
</reference>
<accession>P43998</accession>
<gene>
    <name type="ordered locus">HI_0451</name>
</gene>
<organism>
    <name type="scientific">Haemophilus influenzae (strain ATCC 51907 / DSM 11121 / KW20 / Rd)</name>
    <dbReference type="NCBI Taxonomy" id="71421"/>
    <lineage>
        <taxon>Bacteria</taxon>
        <taxon>Pseudomonadati</taxon>
        <taxon>Pseudomonadota</taxon>
        <taxon>Gammaproteobacteria</taxon>
        <taxon>Pasteurellales</taxon>
        <taxon>Pasteurellaceae</taxon>
        <taxon>Haemophilus</taxon>
    </lineage>
</organism>
<proteinExistence type="predicted"/>
<sequence length="63" mass="7047">MELRQQIPTGCIKQFGQFGVPYVVGEVAEFLPDGDVLVNITLLQSGEKDIYRLSHLLEDPEAE</sequence>
<protein>
    <recommendedName>
        <fullName>Uncharacterized protein HI_0451</fullName>
    </recommendedName>
</protein>
<name>Y451_HAEIN</name>
<dbReference type="EMBL" id="L42023">
    <property type="protein sequence ID" value="AAC22109.1"/>
    <property type="molecule type" value="Genomic_DNA"/>
</dbReference>
<dbReference type="PIR" id="G64007">
    <property type="entry name" value="G64007"/>
</dbReference>
<dbReference type="RefSeq" id="NP_438612.1">
    <property type="nucleotide sequence ID" value="NC_000907.1"/>
</dbReference>
<dbReference type="SMR" id="P43998"/>
<dbReference type="STRING" id="71421.HI_0451"/>
<dbReference type="EnsemblBacteria" id="AAC22109">
    <property type="protein sequence ID" value="AAC22109"/>
    <property type="gene ID" value="HI_0451"/>
</dbReference>
<dbReference type="KEGG" id="hin:HI_0451"/>
<dbReference type="PATRIC" id="fig|71421.8.peg.471"/>
<dbReference type="eggNOG" id="ENOG50339W0">
    <property type="taxonomic scope" value="Bacteria"/>
</dbReference>
<dbReference type="HOGENOM" id="CLU_198262_0_0_6"/>
<dbReference type="OrthoDB" id="1551064at2"/>
<dbReference type="BioCyc" id="HINF71421:G1GJ1-467-MONOMER"/>
<dbReference type="Proteomes" id="UP000000579">
    <property type="component" value="Chromosome"/>
</dbReference>
<dbReference type="InterPro" id="IPR035335">
    <property type="entry name" value="DUF5397"/>
</dbReference>
<dbReference type="Pfam" id="PF17375">
    <property type="entry name" value="DUF5397"/>
    <property type="match status" value="1"/>
</dbReference>
<keyword id="KW-1185">Reference proteome</keyword>
<feature type="chain" id="PRO_0000077923" description="Uncharacterized protein HI_0451">
    <location>
        <begin position="1"/>
        <end position="63"/>
    </location>
</feature>